<organism>
    <name type="scientific">Homo sapiens</name>
    <name type="common">Human</name>
    <dbReference type="NCBI Taxonomy" id="9606"/>
    <lineage>
        <taxon>Eukaryota</taxon>
        <taxon>Metazoa</taxon>
        <taxon>Chordata</taxon>
        <taxon>Craniata</taxon>
        <taxon>Vertebrata</taxon>
        <taxon>Euteleostomi</taxon>
        <taxon>Mammalia</taxon>
        <taxon>Eutheria</taxon>
        <taxon>Euarchontoglires</taxon>
        <taxon>Primates</taxon>
        <taxon>Haplorrhini</taxon>
        <taxon>Catarrhini</taxon>
        <taxon>Hominidae</taxon>
        <taxon>Homo</taxon>
    </lineage>
</organism>
<name>SYCE3_HUMAN</name>
<dbReference type="EMBL" id="EU082028">
    <property type="protein sequence ID" value="ABU52998.1"/>
    <property type="molecule type" value="mRNA"/>
</dbReference>
<dbReference type="EMBL" id="CH471138">
    <property type="protein sequence ID" value="EAW73567.1"/>
    <property type="molecule type" value="Genomic_DNA"/>
</dbReference>
<dbReference type="EMBL" id="BC127859">
    <property type="protein sequence ID" value="AAI27860.1"/>
    <property type="molecule type" value="mRNA"/>
</dbReference>
<dbReference type="EMBL" id="BC127860">
    <property type="protein sequence ID" value="AAI27861.1"/>
    <property type="molecule type" value="mRNA"/>
</dbReference>
<dbReference type="CCDS" id="CCDS46733.1"/>
<dbReference type="RefSeq" id="NP_001116697.1">
    <property type="nucleotide sequence ID" value="NM_001123225.3"/>
</dbReference>
<dbReference type="RefSeq" id="XP_024308029.1">
    <property type="nucleotide sequence ID" value="XM_024452261.2"/>
</dbReference>
<dbReference type="RefSeq" id="XP_054181794.1">
    <property type="nucleotide sequence ID" value="XM_054325819.1"/>
</dbReference>
<dbReference type="PDB" id="6H86">
    <property type="method" value="X-ray"/>
    <property type="resolution" value="1.90 A"/>
    <property type="chains" value="A/B=1-88"/>
</dbReference>
<dbReference type="PDBsum" id="6H86"/>
<dbReference type="SMR" id="A1L190"/>
<dbReference type="BioGRID" id="569383">
    <property type="interactions" value="62"/>
</dbReference>
<dbReference type="ComplexPortal" id="CPX-2461">
    <property type="entry name" value="Synaptonemal complex"/>
</dbReference>
<dbReference type="FunCoup" id="A1L190">
    <property type="interactions" value="511"/>
</dbReference>
<dbReference type="IntAct" id="A1L190">
    <property type="interactions" value="63"/>
</dbReference>
<dbReference type="STRING" id="9606.ENSP00000385480"/>
<dbReference type="iPTMnet" id="A1L190"/>
<dbReference type="PhosphoSitePlus" id="A1L190"/>
<dbReference type="BioMuta" id="SYCE3"/>
<dbReference type="MassIVE" id="A1L190"/>
<dbReference type="PaxDb" id="9606-ENSP00000385480"/>
<dbReference type="PeptideAtlas" id="A1L190"/>
<dbReference type="ProteomicsDB" id="137"/>
<dbReference type="Antibodypedia" id="62384">
    <property type="antibodies" value="13 antibodies from 8 providers"/>
</dbReference>
<dbReference type="DNASU" id="644186"/>
<dbReference type="Ensembl" id="ENST00000402753.1">
    <property type="protein sequence ID" value="ENSP00000385122.1"/>
    <property type="gene ID" value="ENSG00000217442.4"/>
</dbReference>
<dbReference type="Ensembl" id="ENST00000406915.4">
    <property type="protein sequence ID" value="ENSP00000385480.3"/>
    <property type="gene ID" value="ENSG00000217442.4"/>
</dbReference>
<dbReference type="GeneID" id="644186"/>
<dbReference type="KEGG" id="hsa:644186"/>
<dbReference type="MANE-Select" id="ENST00000406915.4">
    <property type="protein sequence ID" value="ENSP00000385480.3"/>
    <property type="RefSeq nucleotide sequence ID" value="NM_001123225.3"/>
    <property type="RefSeq protein sequence ID" value="NP_001116697.1"/>
</dbReference>
<dbReference type="UCSC" id="uc003bmj.5">
    <property type="organism name" value="human"/>
</dbReference>
<dbReference type="AGR" id="HGNC:35245"/>
<dbReference type="CTD" id="644186"/>
<dbReference type="DisGeNET" id="644186"/>
<dbReference type="GeneCards" id="SYCE3"/>
<dbReference type="HGNC" id="HGNC:35245">
    <property type="gene designation" value="SYCE3"/>
</dbReference>
<dbReference type="HPA" id="ENSG00000217442">
    <property type="expression patterns" value="Tissue enriched (testis)"/>
</dbReference>
<dbReference type="MIM" id="615775">
    <property type="type" value="gene"/>
</dbReference>
<dbReference type="neXtProt" id="NX_A1L190"/>
<dbReference type="OpenTargets" id="ENSG00000217442"/>
<dbReference type="PharmGKB" id="PA164717081"/>
<dbReference type="VEuPathDB" id="HostDB:ENSG00000217442"/>
<dbReference type="eggNOG" id="ENOG502S4TF">
    <property type="taxonomic scope" value="Eukaryota"/>
</dbReference>
<dbReference type="GeneTree" id="ENSGT00390000009978"/>
<dbReference type="HOGENOM" id="CLU_2548975_0_0_1"/>
<dbReference type="InParanoid" id="A1L190"/>
<dbReference type="OMA" id="KWQEVLM"/>
<dbReference type="OrthoDB" id="9944849at2759"/>
<dbReference type="PAN-GO" id="A1L190">
    <property type="GO annotations" value="3 GO annotations based on evolutionary models"/>
</dbReference>
<dbReference type="PhylomeDB" id="A1L190"/>
<dbReference type="PathwayCommons" id="A1L190"/>
<dbReference type="Reactome" id="R-HSA-1221632">
    <property type="pathway name" value="Meiotic synapsis"/>
</dbReference>
<dbReference type="SignaLink" id="A1L190"/>
<dbReference type="SIGNOR" id="A1L190"/>
<dbReference type="BioGRID-ORCS" id="644186">
    <property type="hits" value="17 hits in 1145 CRISPR screens"/>
</dbReference>
<dbReference type="ChiTaRS" id="SYCE3">
    <property type="organism name" value="human"/>
</dbReference>
<dbReference type="GenomeRNAi" id="644186"/>
<dbReference type="Pharos" id="A1L190">
    <property type="development level" value="Tdark"/>
</dbReference>
<dbReference type="PRO" id="PR:A1L190"/>
<dbReference type="Proteomes" id="UP000005640">
    <property type="component" value="Chromosome 22"/>
</dbReference>
<dbReference type="RNAct" id="A1L190">
    <property type="molecule type" value="protein"/>
</dbReference>
<dbReference type="Bgee" id="ENSG00000217442">
    <property type="expression patterns" value="Expressed in left testis and 113 other cell types or tissues"/>
</dbReference>
<dbReference type="GO" id="GO:0000801">
    <property type="term" value="C:central element"/>
    <property type="evidence" value="ECO:0000250"/>
    <property type="project" value="UniProtKB"/>
</dbReference>
<dbReference type="GO" id="GO:0005694">
    <property type="term" value="C:chromosome"/>
    <property type="evidence" value="ECO:0000250"/>
    <property type="project" value="UniProtKB"/>
</dbReference>
<dbReference type="GO" id="GO:0005634">
    <property type="term" value="C:nucleus"/>
    <property type="evidence" value="ECO:0000250"/>
    <property type="project" value="UniProtKB"/>
</dbReference>
<dbReference type="GO" id="GO:0006915">
    <property type="term" value="P:apoptotic process"/>
    <property type="evidence" value="ECO:0007669"/>
    <property type="project" value="Ensembl"/>
</dbReference>
<dbReference type="GO" id="GO:0051301">
    <property type="term" value="P:cell division"/>
    <property type="evidence" value="ECO:0007669"/>
    <property type="project" value="UniProtKB-KW"/>
</dbReference>
<dbReference type="GO" id="GO:0035234">
    <property type="term" value="P:ectopic germ cell programmed cell death"/>
    <property type="evidence" value="ECO:0007669"/>
    <property type="project" value="Ensembl"/>
</dbReference>
<dbReference type="GO" id="GO:0043065">
    <property type="term" value="P:positive regulation of apoptotic process"/>
    <property type="evidence" value="ECO:0007669"/>
    <property type="project" value="Ensembl"/>
</dbReference>
<dbReference type="GO" id="GO:0051094">
    <property type="term" value="P:positive regulation of developmental process"/>
    <property type="evidence" value="ECO:0007669"/>
    <property type="project" value="Ensembl"/>
</dbReference>
<dbReference type="GO" id="GO:2000243">
    <property type="term" value="P:positive regulation of reproductive process"/>
    <property type="evidence" value="ECO:0007669"/>
    <property type="project" value="Ensembl"/>
</dbReference>
<dbReference type="GO" id="GO:0007131">
    <property type="term" value="P:reciprocal meiotic recombination"/>
    <property type="evidence" value="ECO:0000250"/>
    <property type="project" value="UniProtKB"/>
</dbReference>
<dbReference type="GO" id="GO:0007283">
    <property type="term" value="P:spermatogenesis"/>
    <property type="evidence" value="ECO:0000250"/>
    <property type="project" value="UniProtKB"/>
</dbReference>
<dbReference type="GO" id="GO:0007130">
    <property type="term" value="P:synaptonemal complex assembly"/>
    <property type="evidence" value="ECO:0000250"/>
    <property type="project" value="UniProtKB"/>
</dbReference>
<dbReference type="InterPro" id="IPR028145">
    <property type="entry name" value="Synaptonemal_3"/>
</dbReference>
<dbReference type="PANTHER" id="PTHR36686">
    <property type="entry name" value="SYNAPTONEMAL COMPLEX CENTRAL ELEMENT PROTEIN 3"/>
    <property type="match status" value="1"/>
</dbReference>
<dbReference type="PANTHER" id="PTHR36686:SF1">
    <property type="entry name" value="SYNAPTONEMAL COMPLEX CENTRAL ELEMENT PROTEIN 3"/>
    <property type="match status" value="1"/>
</dbReference>
<dbReference type="Pfam" id="PF15191">
    <property type="entry name" value="Synaptonemal_3"/>
    <property type="match status" value="1"/>
</dbReference>
<comment type="function">
    <text evidence="1 4">Major component of the transverse central element of synaptonemal complexes (SCS), formed between homologous chromosomes during meiotic prophase (PubMed:36635604). Required for the assembly of the central element of the synaptonemal complex during meiosis, via remodeling of SYCP1 lattice structures and promoting recruitment of SYCE2-TEX12 and SYCE1-SIX60S1 complexes (PubMed:36635604). Required for chromosome loading of the central element-specific SCS proteins, and for initiating synapsis between homologous chromosomes (By similarity). Chromosome loading appears to require SYCP1 (By similarity). Required for fertility and normal testis development (By similarity).</text>
</comment>
<comment type="subunit">
    <text evidence="1 3 4">Homodimer (PubMed:31023827). Can form higher-order homooligomers (PubMed:31023827). Interacts with SYCP1 (via tetrameric core); the interaction remodels SYCP1 homotetramers to 2:1 heterotrimers with SYCE3 (PubMed:36635604). SYCP1/SYCE3 heterotrimers form lattice assemblies as part of the mature synaptonemal complex via both lateral and head-to-head interactions (PubMed:36635604). Interacts with the SYCE1-SIX6OS1 complex; the interaction recruits the SYCE1-SIX6OS1 complex to the central element of the synaptonemal complex (PubMed:36635604). Interacts with the SYCE2-TEX12 complex; the interaction promotes fibrous assembly of SYCE2-TEX12 as part of the synaptonemal complex central element (PubMed:36635604). Interacts with SYCE1. Interacts with SYCE2. Interacts with proteasome subunit PSMA8; to participate in meiosis progression during spermatogenesis (By similarity). Interacts with SPO16 (By similarity).</text>
</comment>
<comment type="interaction">
    <interactant intactId="EBI-10283466">
        <id>A1L190</id>
    </interactant>
    <interactant intactId="EBI-465781">
        <id>Q9UL45</id>
        <label>BLOC1S6</label>
    </interactant>
    <organismsDiffer>false</organismsDiffer>
    <experiments>3</experiments>
</comment>
<comment type="interaction">
    <interactant intactId="EBI-10283466">
        <id>A1L190</id>
    </interactant>
    <interactant intactId="EBI-2514791">
        <id>Q96CS2</id>
        <label>HAUS1</label>
    </interactant>
    <organismsDiffer>false</organismsDiffer>
    <experiments>4</experiments>
</comment>
<comment type="interaction">
    <interactant intactId="EBI-10283466">
        <id>A1L190</id>
    </interactant>
    <interactant intactId="EBI-466029">
        <id>P42858</id>
        <label>HTT</label>
    </interactant>
    <organismsDiffer>false</organismsDiffer>
    <experiments>15</experiments>
</comment>
<comment type="interaction">
    <interactant intactId="EBI-10283466">
        <id>A1L190</id>
    </interactant>
    <interactant intactId="EBI-948266">
        <id>O14901</id>
        <label>KLF11</label>
    </interactant>
    <organismsDiffer>false</organismsDiffer>
    <experiments>3</experiments>
</comment>
<comment type="interaction">
    <interactant intactId="EBI-10283466">
        <id>A1L190</id>
    </interactant>
    <interactant intactId="EBI-2514135">
        <id>Q5XKE5</id>
        <label>KRT79</label>
    </interactant>
    <organismsDiffer>false</organismsDiffer>
    <experiments>3</experiments>
</comment>
<comment type="interaction">
    <interactant intactId="EBI-10283466">
        <id>A1L190</id>
    </interactant>
    <interactant intactId="EBI-2811583">
        <id>Q9BVL2</id>
        <label>NUP58</label>
    </interactant>
    <organismsDiffer>false</organismsDiffer>
    <experiments>3</experiments>
</comment>
<comment type="interaction">
    <interactant intactId="EBI-10283466">
        <id>A1L190</id>
    </interactant>
    <interactant intactId="EBI-602382">
        <id>Q16512</id>
        <label>PKN1</label>
    </interactant>
    <organismsDiffer>false</organismsDiffer>
    <experiments>3</experiments>
</comment>
<comment type="interaction">
    <interactant intactId="EBI-10283466">
        <id>A1L190</id>
    </interactant>
    <interactant intactId="EBI-749195">
        <id>P60891</id>
        <label>PRPS1</label>
    </interactant>
    <organismsDiffer>false</organismsDiffer>
    <experiments>3</experiments>
</comment>
<comment type="interaction">
    <interactant intactId="EBI-10283466">
        <id>A1L190</id>
    </interactant>
    <interactant intactId="EBI-743117">
        <id>Q96ES7</id>
        <label>SGF29</label>
    </interactant>
    <organismsDiffer>false</organismsDiffer>
    <experiments>3</experiments>
</comment>
<comment type="interaction">
    <interactant intactId="EBI-10283466">
        <id>A1L190</id>
    </interactant>
    <interactant intactId="EBI-720609">
        <id>O76024</id>
        <label>WFS1</label>
    </interactant>
    <organismsDiffer>false</organismsDiffer>
    <experiments>3</experiments>
</comment>
<comment type="subcellular location">
    <subcellularLocation>
        <location evidence="1">Nucleus</location>
    </subcellularLocation>
    <subcellularLocation>
        <location evidence="1">Chromosome</location>
    </subcellularLocation>
    <text evidence="1">Colocalizes with SYCE1 in the central elements.</text>
</comment>
<reference key="1">
    <citation type="submission" date="2007-08" db="EMBL/GenBank/DDBJ databases">
        <title>Cloning of THEG-2, a novel gene highly expressed in human testis.</title>
        <authorList>
            <person name="Liu Y."/>
            <person name="Gu Z."/>
            <person name="Wang Z."/>
            <person name="Cai J."/>
            <person name="Jiang G."/>
            <person name="Zheng L."/>
            <person name="Zeng F."/>
            <person name="Tong Q."/>
        </authorList>
    </citation>
    <scope>NUCLEOTIDE SEQUENCE [MRNA]</scope>
    <source>
        <tissue>Testis</tissue>
    </source>
</reference>
<reference key="2">
    <citation type="submission" date="2005-07" db="EMBL/GenBank/DDBJ databases">
        <authorList>
            <person name="Mural R.J."/>
            <person name="Istrail S."/>
            <person name="Sutton G.G."/>
            <person name="Florea L."/>
            <person name="Halpern A.L."/>
            <person name="Mobarry C.M."/>
            <person name="Lippert R."/>
            <person name="Walenz B."/>
            <person name="Shatkay H."/>
            <person name="Dew I."/>
            <person name="Miller J.R."/>
            <person name="Flanigan M.J."/>
            <person name="Edwards N.J."/>
            <person name="Bolanos R."/>
            <person name="Fasulo D."/>
            <person name="Halldorsson B.V."/>
            <person name="Hannenhalli S."/>
            <person name="Turner R."/>
            <person name="Yooseph S."/>
            <person name="Lu F."/>
            <person name="Nusskern D.R."/>
            <person name="Shue B.C."/>
            <person name="Zheng X.H."/>
            <person name="Zhong F."/>
            <person name="Delcher A.L."/>
            <person name="Huson D.H."/>
            <person name="Kravitz S.A."/>
            <person name="Mouchard L."/>
            <person name="Reinert K."/>
            <person name="Remington K.A."/>
            <person name="Clark A.G."/>
            <person name="Waterman M.S."/>
            <person name="Eichler E.E."/>
            <person name="Adams M.D."/>
            <person name="Hunkapiller M.W."/>
            <person name="Myers E.W."/>
            <person name="Venter J.C."/>
        </authorList>
    </citation>
    <scope>NUCLEOTIDE SEQUENCE [LARGE SCALE GENOMIC DNA]</scope>
</reference>
<reference key="3">
    <citation type="journal article" date="2004" name="Genome Res.">
        <title>The status, quality, and expansion of the NIH full-length cDNA project: the Mammalian Gene Collection (MGC).</title>
        <authorList>
            <consortium name="The MGC Project Team"/>
        </authorList>
    </citation>
    <scope>NUCLEOTIDE SEQUENCE [LARGE SCALE MRNA]</scope>
</reference>
<reference key="4">
    <citation type="journal article" date="2023" name="Nat. Struct. Mol. Biol.">
        <title>Structural maturation of SYCP1-mediated meiotic chromosome synapsis by SYCE3.</title>
        <authorList>
            <person name="Crichton J.H."/>
            <person name="Dunce J.M."/>
            <person name="Dunne O.M."/>
            <person name="Salmon L.J."/>
            <person name="Devenney P.S."/>
            <person name="Lawson J."/>
            <person name="Adams I.R."/>
            <person name="Davies O.R."/>
        </authorList>
    </citation>
    <scope>FUNCTION</scope>
    <scope>INTERACTION WITH THE SYCE1-SIX6OS1 COMPLEX; THE SYCE2-TEX12 COMPLEX AND SYCP1</scope>
    <scope>MUTAGENESIS OF TRP-41 AND TYR-44</scope>
</reference>
<reference evidence="6" key="5">
    <citation type="journal article" date="2019" name="J. Biol. Chem.">
        <title>A molecular model for self-assembly of the synaptonemal complex protein SYCE3.</title>
        <authorList>
            <person name="Dunne O.M."/>
            <person name="Davies O.R."/>
        </authorList>
    </citation>
    <scope>X-RAY CRYSTALLOGRAPHY (1.90 ANGSTROMS)</scope>
    <scope>SUBUNIT</scope>
    <scope>MUTAGENESIS OF TRP-41; TYR-44 AND PRO-53</scope>
</reference>
<keyword id="KW-0002">3D-structure</keyword>
<keyword id="KW-0131">Cell cycle</keyword>
<keyword id="KW-0132">Cell division</keyword>
<keyword id="KW-0158">Chromosome</keyword>
<keyword id="KW-0175">Coiled coil</keyword>
<keyword id="KW-0469">Meiosis</keyword>
<keyword id="KW-0539">Nucleus</keyword>
<keyword id="KW-1267">Proteomics identification</keyword>
<keyword id="KW-1185">Reference proteome</keyword>
<proteinExistence type="evidence at protein level"/>
<protein>
    <recommendedName>
        <fullName evidence="5">Synaptonemal complex central element protein 3</fullName>
    </recommendedName>
    <alternativeName>
        <fullName evidence="1">Testis highly expressed gene 2 protein</fullName>
        <shortName evidence="1">THEG-2</shortName>
    </alternativeName>
</protein>
<evidence type="ECO:0000250" key="1">
    <source>
        <dbReference type="UniProtKB" id="B5KM66"/>
    </source>
</evidence>
<evidence type="ECO:0000255" key="2"/>
<evidence type="ECO:0000269" key="3">
    <source>
    </source>
</evidence>
<evidence type="ECO:0000269" key="4">
    <source>
    </source>
</evidence>
<evidence type="ECO:0000312" key="5">
    <source>
        <dbReference type="HGNC" id="HGNC:35245"/>
    </source>
</evidence>
<evidence type="ECO:0007744" key="6">
    <source>
        <dbReference type="PDB" id="6H86"/>
    </source>
</evidence>
<accession>A1L190</accession>
<sequence length="88" mass="10601">MDDADPEERNYDNMLKMLSDLNKDLEKLLEEMEKISVQATWMAYDMVVMRTNPTLAESMRRLEDAFVNCKEEMEKNWQELLHETKQRL</sequence>
<gene>
    <name evidence="5" type="primary">SYCE3</name>
    <name type="synonym">C22orf41</name>
    <name evidence="1" type="synonym">THEG2</name>
</gene>
<feature type="chain" id="PRO_0000367274" description="Synaptonemal complex central element protein 3">
    <location>
        <begin position="1"/>
        <end position="88"/>
    </location>
</feature>
<feature type="coiled-coil region" evidence="2">
    <location>
        <begin position="7"/>
        <end position="75"/>
    </location>
</feature>
<feature type="sequence variant" id="VAR_060126" description="In dbSNP:rs6009989.">
    <original>L</original>
    <variation>P</variation>
    <location>
        <position position="88"/>
    </location>
</feature>
<feature type="mutagenesis site" description="Abolishes formation of higher-order homooligomers; when associated with E-44. Abolishes interaction between SYCP1/SYCE3 heterotrimers; when associated with E-44." evidence="3 4">
    <original>W</original>
    <variation>E</variation>
    <location>
        <position position="41"/>
    </location>
</feature>
<feature type="mutagenesis site" description="Abolishes formation of higher-order homooligomers; when associated with E-41. Abolishes interaction between SYCP1/SYCE3 heterotrimers; when associated with E-41." evidence="3 4">
    <original>Y</original>
    <variation>E</variation>
    <location>
        <position position="44"/>
    </location>
</feature>
<feature type="mutagenesis site" description="Promotes formation of higher-order homooligomers." evidence="3">
    <original>P</original>
    <variation>Q</variation>
    <location>
        <position position="53"/>
    </location>
</feature>